<accession>Q41348</accession>
<comment type="function">
    <text evidence="2">Catalyzes the formation of pyridoxal 5'-phosphate from ribose 5-phosphate (RBP), glyceraldehyde 3-phosphate (G3P) and ammonia. The ammonia is provided by PDX2. Can also use ribulose 5-phosphate and dihydroxyacetone phosphate as substrates, resulting from enzyme-catalyzed isomerization of RBP and G3P, respectively. Also plays an indirect role in resistance to singlet oxygen-generating photosensitizers.</text>
</comment>
<comment type="catalytic activity">
    <reaction evidence="3">
        <text>aldehydo-D-ribose 5-phosphate + D-glyceraldehyde 3-phosphate + L-glutamine = pyridoxal 5'-phosphate + L-glutamate + phosphate + 3 H2O + H(+)</text>
        <dbReference type="Rhea" id="RHEA:31507"/>
        <dbReference type="ChEBI" id="CHEBI:15377"/>
        <dbReference type="ChEBI" id="CHEBI:15378"/>
        <dbReference type="ChEBI" id="CHEBI:29985"/>
        <dbReference type="ChEBI" id="CHEBI:43474"/>
        <dbReference type="ChEBI" id="CHEBI:58273"/>
        <dbReference type="ChEBI" id="CHEBI:58359"/>
        <dbReference type="ChEBI" id="CHEBI:59776"/>
        <dbReference type="ChEBI" id="CHEBI:597326"/>
        <dbReference type="EC" id="4.3.3.6"/>
    </reaction>
</comment>
<comment type="pathway">
    <text>Cofactor biosynthesis; pyridoxal 5'-phosphate biosynthesis.</text>
</comment>
<comment type="miscellaneous">
    <text>Vitamin B6 is an essential quencher of singlet oxygen in plants, that can protect cellular membranes from lipid peroxidation.</text>
</comment>
<comment type="similarity">
    <text evidence="4">Belongs to the PdxS/SNZ family.</text>
</comment>
<comment type="sequence caution" evidence="4">
    <conflict type="erroneous initiation">
        <sequence resource="EMBL-CDS" id="CAA50602"/>
    </conflict>
    <text>Truncated N-terminus.</text>
</comment>
<protein>
    <recommendedName>
        <fullName>Probable pyridoxal 5'-phosphate synthase subunit PDX1</fullName>
        <shortName>PLP synthase subunit PDX1</shortName>
        <ecNumber>4.3.3.6</ecNumber>
    </recommendedName>
    <alternativeName>
        <fullName>H47</fullName>
    </alternativeName>
</protein>
<reference key="1">
    <citation type="submission" date="1993-05" db="EMBL/GenBank/DDBJ databases">
        <authorList>
            <person name="Zhang X.-H."/>
        </authorList>
    </citation>
    <scope>NUCLEOTIDE SEQUENCE [MRNA]</scope>
    <source>
        <tissue>Leaf</tissue>
    </source>
</reference>
<dbReference type="EC" id="4.3.3.6"/>
<dbReference type="EMBL" id="X71601">
    <property type="protein sequence ID" value="CAA50602.1"/>
    <property type="status" value="ALT_INIT"/>
    <property type="molecule type" value="mRNA"/>
</dbReference>
<dbReference type="PIR" id="S33204">
    <property type="entry name" value="S33204"/>
</dbReference>
<dbReference type="SMR" id="Q41348"/>
<dbReference type="UniPathway" id="UPA00245"/>
<dbReference type="GO" id="GO:0036381">
    <property type="term" value="F:pyridoxal 5'-phosphate synthase (glutamine hydrolysing) activity"/>
    <property type="evidence" value="ECO:0007669"/>
    <property type="project" value="UniProtKB-EC"/>
</dbReference>
<dbReference type="GO" id="GO:0006520">
    <property type="term" value="P:amino acid metabolic process"/>
    <property type="evidence" value="ECO:0007669"/>
    <property type="project" value="TreeGrafter"/>
</dbReference>
<dbReference type="GO" id="GO:0042823">
    <property type="term" value="P:pyridoxal phosphate biosynthetic process"/>
    <property type="evidence" value="ECO:0007669"/>
    <property type="project" value="UniProtKB-UniPathway"/>
</dbReference>
<dbReference type="GO" id="GO:0008615">
    <property type="term" value="P:pyridoxine biosynthetic process"/>
    <property type="evidence" value="ECO:0007669"/>
    <property type="project" value="TreeGrafter"/>
</dbReference>
<dbReference type="Gene3D" id="3.20.20.70">
    <property type="entry name" value="Aldolase class I"/>
    <property type="match status" value="1"/>
</dbReference>
<dbReference type="InterPro" id="IPR013785">
    <property type="entry name" value="Aldolase_TIM"/>
</dbReference>
<dbReference type="InterPro" id="IPR001852">
    <property type="entry name" value="PdxS/SNZ"/>
</dbReference>
<dbReference type="InterPro" id="IPR033755">
    <property type="entry name" value="PdxS/SNZ_N"/>
</dbReference>
<dbReference type="InterPro" id="IPR011060">
    <property type="entry name" value="RibuloseP-bd_barrel"/>
</dbReference>
<dbReference type="PANTHER" id="PTHR31829">
    <property type="entry name" value="PYRIDOXAL 5'-PHOSPHATE SYNTHASE SUBUNIT SNZ1-RELATED"/>
    <property type="match status" value="1"/>
</dbReference>
<dbReference type="PANTHER" id="PTHR31829:SF0">
    <property type="entry name" value="PYRIDOXAL 5'-PHOSPHATE SYNTHASE SUBUNIT SNZ1-RELATED"/>
    <property type="match status" value="1"/>
</dbReference>
<dbReference type="Pfam" id="PF01680">
    <property type="entry name" value="SOR_SNZ"/>
    <property type="match status" value="1"/>
</dbReference>
<dbReference type="SUPFAM" id="SSF51366">
    <property type="entry name" value="Ribulose-phoshate binding barrel"/>
    <property type="match status" value="1"/>
</dbReference>
<dbReference type="PROSITE" id="PS01235">
    <property type="entry name" value="PDXS_SNZ_1"/>
    <property type="match status" value="1"/>
</dbReference>
<dbReference type="PROSITE" id="PS51129">
    <property type="entry name" value="PDXS_SNZ_2"/>
    <property type="match status" value="1"/>
</dbReference>
<proteinExistence type="evidence at transcript level"/>
<keyword id="KW-0456">Lyase</keyword>
<keyword id="KW-0663">Pyridoxal phosphate</keyword>
<keyword id="KW-0704">Schiff base</keyword>
<name>PDX1_STELP</name>
<sequence>LIKEIKAAVTIPVMAKARIGHFVEAQILESIGVDYVDESEVLTPADEDHHINKHNFQIPFVCGLSIPRGAPPPAYRRGYAGHDTGPRVRKPSTGNVVEAVRHIRSVMGEIRLLRNMDDDEVFAYAKKISAAYDLVMQTKQLGRLPVVNFAAGGVATPADAALMMQLGCDGVFVGSGVFKSGDPAKRARAIVQAVTHYSDPDLLGRGEFGLGEAMVGIIVRMRRLRGTPIVLNEVI</sequence>
<feature type="chain" id="PRO_0000109373" description="Probable pyridoxal 5'-phosphate synthase subunit PDX1">
    <location>
        <begin position="1" status="less than"/>
        <end position="235"/>
    </location>
</feature>
<feature type="active site" description="Schiff-base intermediate with D-ribose 5-phosphate" evidence="1">
    <location>
        <position position="16"/>
    </location>
</feature>
<feature type="binding site" evidence="3">
    <location>
        <position position="104"/>
    </location>
    <ligand>
        <name>D-glyceraldehyde 3-phosphate</name>
        <dbReference type="ChEBI" id="CHEBI:59776"/>
    </ligand>
</feature>
<feature type="binding site" evidence="1">
    <location>
        <position position="153"/>
    </location>
    <ligand>
        <name>D-ribose 5-phosphate</name>
        <dbReference type="ChEBI" id="CHEBI:78346"/>
    </ligand>
</feature>
<feature type="binding site" evidence="1">
    <location>
        <begin position="174"/>
        <end position="175"/>
    </location>
    <ligand>
        <name>D-ribose 5-phosphate</name>
        <dbReference type="ChEBI" id="CHEBI:78346"/>
    </ligand>
</feature>
<feature type="non-terminal residue">
    <location>
        <position position="1"/>
    </location>
</feature>
<evidence type="ECO:0000250" key="1">
    <source>
        <dbReference type="UniProtKB" id="O59080"/>
    </source>
</evidence>
<evidence type="ECO:0000250" key="2">
    <source>
        <dbReference type="UniProtKB" id="O80448"/>
    </source>
</evidence>
<evidence type="ECO:0000250" key="3">
    <source>
        <dbReference type="UniProtKB" id="Q03148"/>
    </source>
</evidence>
<evidence type="ECO:0000305" key="4"/>
<organism>
    <name type="scientific">Stellaria longipes</name>
    <name type="common">Longstalk starwort</name>
    <name type="synonym">Alsine longipes</name>
    <dbReference type="NCBI Taxonomy" id="19744"/>
    <lineage>
        <taxon>Eukaryota</taxon>
        <taxon>Viridiplantae</taxon>
        <taxon>Streptophyta</taxon>
        <taxon>Embryophyta</taxon>
        <taxon>Tracheophyta</taxon>
        <taxon>Spermatophyta</taxon>
        <taxon>Magnoliopsida</taxon>
        <taxon>eudicotyledons</taxon>
        <taxon>Gunneridae</taxon>
        <taxon>Pentapetalae</taxon>
        <taxon>Caryophyllales</taxon>
        <taxon>Caryophyllaceae</taxon>
        <taxon>Alsineae</taxon>
        <taxon>Stellaria</taxon>
    </lineage>
</organism>